<proteinExistence type="inferred from homology"/>
<keyword id="KW-0414">Isoprene biosynthesis</keyword>
<keyword id="KW-0456">Lyase</keyword>
<keyword id="KW-0479">Metal-binding</keyword>
<feature type="chain" id="PRO_1000057709" description="2-C-methyl-D-erythritol 2,4-cyclodiphosphate synthase">
    <location>
        <begin position="1"/>
        <end position="159"/>
    </location>
</feature>
<feature type="binding site" evidence="1">
    <location>
        <begin position="8"/>
        <end position="10"/>
    </location>
    <ligand>
        <name>4-CDP-2-C-methyl-D-erythritol 2-phosphate</name>
        <dbReference type="ChEBI" id="CHEBI:57919"/>
    </ligand>
</feature>
<feature type="binding site" evidence="1">
    <location>
        <position position="8"/>
    </location>
    <ligand>
        <name>a divalent metal cation</name>
        <dbReference type="ChEBI" id="CHEBI:60240"/>
    </ligand>
</feature>
<feature type="binding site" evidence="1">
    <location>
        <position position="10"/>
    </location>
    <ligand>
        <name>a divalent metal cation</name>
        <dbReference type="ChEBI" id="CHEBI:60240"/>
    </ligand>
</feature>
<feature type="binding site" evidence="1">
    <location>
        <begin position="34"/>
        <end position="35"/>
    </location>
    <ligand>
        <name>4-CDP-2-C-methyl-D-erythritol 2-phosphate</name>
        <dbReference type="ChEBI" id="CHEBI:57919"/>
    </ligand>
</feature>
<feature type="binding site" evidence="1">
    <location>
        <position position="42"/>
    </location>
    <ligand>
        <name>a divalent metal cation</name>
        <dbReference type="ChEBI" id="CHEBI:60240"/>
    </ligand>
</feature>
<feature type="binding site" evidence="1">
    <location>
        <begin position="56"/>
        <end position="58"/>
    </location>
    <ligand>
        <name>4-CDP-2-C-methyl-D-erythritol 2-phosphate</name>
        <dbReference type="ChEBI" id="CHEBI:57919"/>
    </ligand>
</feature>
<feature type="binding site" evidence="1">
    <location>
        <begin position="61"/>
        <end position="65"/>
    </location>
    <ligand>
        <name>4-CDP-2-C-methyl-D-erythritol 2-phosphate</name>
        <dbReference type="ChEBI" id="CHEBI:57919"/>
    </ligand>
</feature>
<feature type="binding site" evidence="1">
    <location>
        <begin position="100"/>
        <end position="106"/>
    </location>
    <ligand>
        <name>4-CDP-2-C-methyl-D-erythritol 2-phosphate</name>
        <dbReference type="ChEBI" id="CHEBI:57919"/>
    </ligand>
</feature>
<feature type="binding site" evidence="1">
    <location>
        <begin position="132"/>
        <end position="135"/>
    </location>
    <ligand>
        <name>4-CDP-2-C-methyl-D-erythritol 2-phosphate</name>
        <dbReference type="ChEBI" id="CHEBI:57919"/>
    </ligand>
</feature>
<feature type="binding site" evidence="1">
    <location>
        <position position="139"/>
    </location>
    <ligand>
        <name>4-CDP-2-C-methyl-D-erythritol 2-phosphate</name>
        <dbReference type="ChEBI" id="CHEBI:57919"/>
    </ligand>
</feature>
<feature type="binding site" evidence="1">
    <location>
        <position position="142"/>
    </location>
    <ligand>
        <name>4-CDP-2-C-methyl-D-erythritol 2-phosphate</name>
        <dbReference type="ChEBI" id="CHEBI:57919"/>
    </ligand>
</feature>
<feature type="site" description="Transition state stabilizer" evidence="1">
    <location>
        <position position="34"/>
    </location>
</feature>
<feature type="site" description="Transition state stabilizer" evidence="1">
    <location>
        <position position="133"/>
    </location>
</feature>
<dbReference type="EC" id="4.6.1.12" evidence="1"/>
<dbReference type="EMBL" id="CP000802">
    <property type="protein sequence ID" value="ABV07129.1"/>
    <property type="molecule type" value="Genomic_DNA"/>
</dbReference>
<dbReference type="RefSeq" id="WP_001219242.1">
    <property type="nucleotide sequence ID" value="NC_009800.1"/>
</dbReference>
<dbReference type="SMR" id="A8A3M5"/>
<dbReference type="GeneID" id="93779260"/>
<dbReference type="KEGG" id="ecx:EcHS_A2884"/>
<dbReference type="HOGENOM" id="CLU_084630_2_0_6"/>
<dbReference type="UniPathway" id="UPA00056">
    <property type="reaction ID" value="UER00095"/>
</dbReference>
<dbReference type="GO" id="GO:0008685">
    <property type="term" value="F:2-C-methyl-D-erythritol 2,4-cyclodiphosphate synthase activity"/>
    <property type="evidence" value="ECO:0007669"/>
    <property type="project" value="UniProtKB-UniRule"/>
</dbReference>
<dbReference type="GO" id="GO:0046872">
    <property type="term" value="F:metal ion binding"/>
    <property type="evidence" value="ECO:0007669"/>
    <property type="project" value="UniProtKB-KW"/>
</dbReference>
<dbReference type="GO" id="GO:0019288">
    <property type="term" value="P:isopentenyl diphosphate biosynthetic process, methylerythritol 4-phosphate pathway"/>
    <property type="evidence" value="ECO:0007669"/>
    <property type="project" value="UniProtKB-UniRule"/>
</dbReference>
<dbReference type="GO" id="GO:0016114">
    <property type="term" value="P:terpenoid biosynthetic process"/>
    <property type="evidence" value="ECO:0007669"/>
    <property type="project" value="InterPro"/>
</dbReference>
<dbReference type="CDD" id="cd00554">
    <property type="entry name" value="MECDP_synthase"/>
    <property type="match status" value="1"/>
</dbReference>
<dbReference type="FunFam" id="3.30.1330.50:FF:000001">
    <property type="entry name" value="2-C-methyl-D-erythritol 2,4-cyclodiphosphate synthase"/>
    <property type="match status" value="1"/>
</dbReference>
<dbReference type="Gene3D" id="3.30.1330.50">
    <property type="entry name" value="2-C-methyl-D-erythritol 2,4-cyclodiphosphate synthase"/>
    <property type="match status" value="1"/>
</dbReference>
<dbReference type="HAMAP" id="MF_00107">
    <property type="entry name" value="IspF"/>
    <property type="match status" value="1"/>
</dbReference>
<dbReference type="InterPro" id="IPR003526">
    <property type="entry name" value="MECDP_synthase"/>
</dbReference>
<dbReference type="InterPro" id="IPR020555">
    <property type="entry name" value="MECDP_synthase_CS"/>
</dbReference>
<dbReference type="InterPro" id="IPR036571">
    <property type="entry name" value="MECDP_synthase_sf"/>
</dbReference>
<dbReference type="NCBIfam" id="TIGR00151">
    <property type="entry name" value="ispF"/>
    <property type="match status" value="1"/>
</dbReference>
<dbReference type="PANTHER" id="PTHR43181">
    <property type="entry name" value="2-C-METHYL-D-ERYTHRITOL 2,4-CYCLODIPHOSPHATE SYNTHASE, CHLOROPLASTIC"/>
    <property type="match status" value="1"/>
</dbReference>
<dbReference type="PANTHER" id="PTHR43181:SF1">
    <property type="entry name" value="2-C-METHYL-D-ERYTHRITOL 2,4-CYCLODIPHOSPHATE SYNTHASE, CHLOROPLASTIC"/>
    <property type="match status" value="1"/>
</dbReference>
<dbReference type="Pfam" id="PF02542">
    <property type="entry name" value="YgbB"/>
    <property type="match status" value="1"/>
</dbReference>
<dbReference type="SUPFAM" id="SSF69765">
    <property type="entry name" value="IpsF-like"/>
    <property type="match status" value="1"/>
</dbReference>
<dbReference type="PROSITE" id="PS01350">
    <property type="entry name" value="ISPF"/>
    <property type="match status" value="1"/>
</dbReference>
<organism>
    <name type="scientific">Escherichia coli O9:H4 (strain HS)</name>
    <dbReference type="NCBI Taxonomy" id="331112"/>
    <lineage>
        <taxon>Bacteria</taxon>
        <taxon>Pseudomonadati</taxon>
        <taxon>Pseudomonadota</taxon>
        <taxon>Gammaproteobacteria</taxon>
        <taxon>Enterobacterales</taxon>
        <taxon>Enterobacteriaceae</taxon>
        <taxon>Escherichia</taxon>
    </lineage>
</organism>
<accession>A8A3M5</accession>
<sequence length="159" mass="16898">MRIGHGFDVHAFGGEGPIIIGGVRIPYEKGLLAHSDGDVALHALTDALLGAAALGDIGKLFPDTDPAFKGADSRELLREAWRRIQAKGYTLGNVDVTIIAQAPKMLPHIPQMRVFIAEDLGCHMDDVNVKATTTEKLGFTGRGEGIACEAVALLIKATK</sequence>
<reference key="1">
    <citation type="journal article" date="2008" name="J. Bacteriol.">
        <title>The pangenome structure of Escherichia coli: comparative genomic analysis of E. coli commensal and pathogenic isolates.</title>
        <authorList>
            <person name="Rasko D.A."/>
            <person name="Rosovitz M.J."/>
            <person name="Myers G.S.A."/>
            <person name="Mongodin E.F."/>
            <person name="Fricke W.F."/>
            <person name="Gajer P."/>
            <person name="Crabtree J."/>
            <person name="Sebaihia M."/>
            <person name="Thomson N.R."/>
            <person name="Chaudhuri R."/>
            <person name="Henderson I.R."/>
            <person name="Sperandio V."/>
            <person name="Ravel J."/>
        </authorList>
    </citation>
    <scope>NUCLEOTIDE SEQUENCE [LARGE SCALE GENOMIC DNA]</scope>
    <source>
        <strain>HS</strain>
    </source>
</reference>
<protein>
    <recommendedName>
        <fullName evidence="1">2-C-methyl-D-erythritol 2,4-cyclodiphosphate synthase</fullName>
        <shortName evidence="1">MECDP-synthase</shortName>
        <shortName evidence="1">MECPP-synthase</shortName>
        <shortName evidence="1">MECPS</shortName>
        <ecNumber evidence="1">4.6.1.12</ecNumber>
    </recommendedName>
</protein>
<gene>
    <name evidence="1" type="primary">ispF</name>
    <name type="ordered locus">EcHS_A2884</name>
</gene>
<name>ISPF_ECOHS</name>
<comment type="function">
    <text evidence="1">Involved in the biosynthesis of isopentenyl diphosphate (IPP) and dimethylallyl diphosphate (DMAPP), two major building blocks of isoprenoid compounds. Catalyzes the conversion of 4-diphosphocytidyl-2-C-methyl-D-erythritol 2-phosphate (CDP-ME2P) to 2-C-methyl-D-erythritol 2,4-cyclodiphosphate (ME-CPP) with a corresponding release of cytidine 5-monophosphate (CMP).</text>
</comment>
<comment type="catalytic activity">
    <reaction evidence="1">
        <text>4-CDP-2-C-methyl-D-erythritol 2-phosphate = 2-C-methyl-D-erythritol 2,4-cyclic diphosphate + CMP</text>
        <dbReference type="Rhea" id="RHEA:23864"/>
        <dbReference type="ChEBI" id="CHEBI:57919"/>
        <dbReference type="ChEBI" id="CHEBI:58483"/>
        <dbReference type="ChEBI" id="CHEBI:60377"/>
        <dbReference type="EC" id="4.6.1.12"/>
    </reaction>
</comment>
<comment type="cofactor">
    <cofactor evidence="1">
        <name>a divalent metal cation</name>
        <dbReference type="ChEBI" id="CHEBI:60240"/>
    </cofactor>
    <text evidence="1">Binds 1 divalent metal cation per subunit.</text>
</comment>
<comment type="pathway">
    <text evidence="1">Isoprenoid biosynthesis; isopentenyl diphosphate biosynthesis via DXP pathway; isopentenyl diphosphate from 1-deoxy-D-xylulose 5-phosphate: step 4/6.</text>
</comment>
<comment type="subunit">
    <text evidence="1">Homotrimer.</text>
</comment>
<comment type="similarity">
    <text evidence="1">Belongs to the IspF family.</text>
</comment>
<evidence type="ECO:0000255" key="1">
    <source>
        <dbReference type="HAMAP-Rule" id="MF_00107"/>
    </source>
</evidence>